<accession>Q7V0C7</accession>
<proteinExistence type="inferred from homology"/>
<dbReference type="EC" id="6.3.2.6" evidence="1"/>
<dbReference type="EMBL" id="BX548174">
    <property type="protein sequence ID" value="CAE19798.1"/>
    <property type="molecule type" value="Genomic_DNA"/>
</dbReference>
<dbReference type="RefSeq" id="WP_011132973.1">
    <property type="nucleotide sequence ID" value="NC_005072.1"/>
</dbReference>
<dbReference type="SMR" id="Q7V0C7"/>
<dbReference type="STRING" id="59919.PMM1339"/>
<dbReference type="KEGG" id="pmm:PMM1339"/>
<dbReference type="eggNOG" id="COG0152">
    <property type="taxonomic scope" value="Bacteria"/>
</dbReference>
<dbReference type="HOGENOM" id="CLU_061495_2_0_3"/>
<dbReference type="OrthoDB" id="9801549at2"/>
<dbReference type="UniPathway" id="UPA00074">
    <property type="reaction ID" value="UER00131"/>
</dbReference>
<dbReference type="Proteomes" id="UP000001026">
    <property type="component" value="Chromosome"/>
</dbReference>
<dbReference type="GO" id="GO:0005524">
    <property type="term" value="F:ATP binding"/>
    <property type="evidence" value="ECO:0007669"/>
    <property type="project" value="UniProtKB-KW"/>
</dbReference>
<dbReference type="GO" id="GO:0004639">
    <property type="term" value="F:phosphoribosylaminoimidazolesuccinocarboxamide synthase activity"/>
    <property type="evidence" value="ECO:0007669"/>
    <property type="project" value="UniProtKB-UniRule"/>
</dbReference>
<dbReference type="GO" id="GO:0006189">
    <property type="term" value="P:'de novo' IMP biosynthetic process"/>
    <property type="evidence" value="ECO:0007669"/>
    <property type="project" value="UniProtKB-UniRule"/>
</dbReference>
<dbReference type="GO" id="GO:0009236">
    <property type="term" value="P:cobalamin biosynthetic process"/>
    <property type="evidence" value="ECO:0007669"/>
    <property type="project" value="InterPro"/>
</dbReference>
<dbReference type="CDD" id="cd01415">
    <property type="entry name" value="SAICAR_synt_PurC"/>
    <property type="match status" value="1"/>
</dbReference>
<dbReference type="FunFam" id="3.30.470.20:FF:000006">
    <property type="entry name" value="Phosphoribosylaminoimidazole-succinocarboxamide synthase"/>
    <property type="match status" value="1"/>
</dbReference>
<dbReference type="Gene3D" id="3.30.470.20">
    <property type="entry name" value="ATP-grasp fold, B domain"/>
    <property type="match status" value="1"/>
</dbReference>
<dbReference type="Gene3D" id="3.30.200.20">
    <property type="entry name" value="Phosphorylase Kinase, domain 1"/>
    <property type="match status" value="1"/>
</dbReference>
<dbReference type="HAMAP" id="MF_00137">
    <property type="entry name" value="SAICAR_synth"/>
    <property type="match status" value="1"/>
</dbReference>
<dbReference type="InterPro" id="IPR028923">
    <property type="entry name" value="SAICAR_synt/ADE2_N"/>
</dbReference>
<dbReference type="InterPro" id="IPR033934">
    <property type="entry name" value="SAICAR_synt_PurC"/>
</dbReference>
<dbReference type="InterPro" id="IPR001636">
    <property type="entry name" value="SAICAR_synth"/>
</dbReference>
<dbReference type="InterPro" id="IPR050089">
    <property type="entry name" value="SAICAR_synthetase"/>
</dbReference>
<dbReference type="InterPro" id="IPR018236">
    <property type="entry name" value="SAICAR_synthetase_CS"/>
</dbReference>
<dbReference type="NCBIfam" id="TIGR00081">
    <property type="entry name" value="purC"/>
    <property type="match status" value="1"/>
</dbReference>
<dbReference type="PANTHER" id="PTHR43599">
    <property type="entry name" value="MULTIFUNCTIONAL PROTEIN ADE2"/>
    <property type="match status" value="1"/>
</dbReference>
<dbReference type="PANTHER" id="PTHR43599:SF3">
    <property type="entry name" value="SI:DKEY-6E2.2"/>
    <property type="match status" value="1"/>
</dbReference>
<dbReference type="Pfam" id="PF01259">
    <property type="entry name" value="SAICAR_synt"/>
    <property type="match status" value="1"/>
</dbReference>
<dbReference type="SUPFAM" id="SSF56104">
    <property type="entry name" value="SAICAR synthase-like"/>
    <property type="match status" value="1"/>
</dbReference>
<dbReference type="PROSITE" id="PS01057">
    <property type="entry name" value="SAICAR_SYNTHETASE_1"/>
    <property type="match status" value="1"/>
</dbReference>
<dbReference type="PROSITE" id="PS01058">
    <property type="entry name" value="SAICAR_SYNTHETASE_2"/>
    <property type="match status" value="1"/>
</dbReference>
<gene>
    <name evidence="1" type="primary">purC</name>
    <name type="ordered locus">PMM1339</name>
</gene>
<reference key="1">
    <citation type="journal article" date="2003" name="Nature">
        <title>Genome divergence in two Prochlorococcus ecotypes reflects oceanic niche differentiation.</title>
        <authorList>
            <person name="Rocap G."/>
            <person name="Larimer F.W."/>
            <person name="Lamerdin J.E."/>
            <person name="Malfatti S."/>
            <person name="Chain P."/>
            <person name="Ahlgren N.A."/>
            <person name="Arellano A."/>
            <person name="Coleman M."/>
            <person name="Hauser L."/>
            <person name="Hess W.R."/>
            <person name="Johnson Z.I."/>
            <person name="Land M.L."/>
            <person name="Lindell D."/>
            <person name="Post A.F."/>
            <person name="Regala W."/>
            <person name="Shah M."/>
            <person name="Shaw S.L."/>
            <person name="Steglich C."/>
            <person name="Sullivan M.B."/>
            <person name="Ting C.S."/>
            <person name="Tolonen A."/>
            <person name="Webb E.A."/>
            <person name="Zinser E.R."/>
            <person name="Chisholm S.W."/>
        </authorList>
    </citation>
    <scope>NUCLEOTIDE SEQUENCE [LARGE SCALE GENOMIC DNA]</scope>
    <source>
        <strain>CCMP1986 / NIES-2087 / MED4</strain>
    </source>
</reference>
<sequence>MNSKLKFIYEGKAKKIFAYEDSDKVIIEFKDDATAFNALKKAKFEGKGELNCLISSKIFEFLIKNNIPTHYIGLKNNNSMIAQKIKIIPLEVVLRNTAYGSLCKQTTIKPGTVLESPLIDFYLKNDTLNDPLLTKDRINLLKIVDEEELDFISNMTLKINKLLKKFFYNIKLDLVDFKLEFGYNSNGQIVLGDEISPDNCRLWDLNQKNGMIVSLDKDRFRNDLGGFIEAYSEINKRINNFI</sequence>
<feature type="chain" id="PRO_0000100854" description="Phosphoribosylaminoimidazole-succinocarboxamide synthase">
    <location>
        <begin position="1"/>
        <end position="242"/>
    </location>
</feature>
<evidence type="ECO:0000255" key="1">
    <source>
        <dbReference type="HAMAP-Rule" id="MF_00137"/>
    </source>
</evidence>
<protein>
    <recommendedName>
        <fullName evidence="1">Phosphoribosylaminoimidazole-succinocarboxamide synthase</fullName>
        <ecNumber evidence="1">6.3.2.6</ecNumber>
    </recommendedName>
    <alternativeName>
        <fullName evidence="1">SAICAR synthetase</fullName>
    </alternativeName>
</protein>
<comment type="catalytic activity">
    <reaction evidence="1">
        <text>5-amino-1-(5-phospho-D-ribosyl)imidazole-4-carboxylate + L-aspartate + ATP = (2S)-2-[5-amino-1-(5-phospho-beta-D-ribosyl)imidazole-4-carboxamido]succinate + ADP + phosphate + 2 H(+)</text>
        <dbReference type="Rhea" id="RHEA:22628"/>
        <dbReference type="ChEBI" id="CHEBI:15378"/>
        <dbReference type="ChEBI" id="CHEBI:29991"/>
        <dbReference type="ChEBI" id="CHEBI:30616"/>
        <dbReference type="ChEBI" id="CHEBI:43474"/>
        <dbReference type="ChEBI" id="CHEBI:58443"/>
        <dbReference type="ChEBI" id="CHEBI:77657"/>
        <dbReference type="ChEBI" id="CHEBI:456216"/>
        <dbReference type="EC" id="6.3.2.6"/>
    </reaction>
</comment>
<comment type="pathway">
    <text evidence="1">Purine metabolism; IMP biosynthesis via de novo pathway; 5-amino-1-(5-phospho-D-ribosyl)imidazole-4-carboxamide from 5-amino-1-(5-phospho-D-ribosyl)imidazole-4-carboxylate: step 1/2.</text>
</comment>
<comment type="similarity">
    <text evidence="1">Belongs to the SAICAR synthetase family.</text>
</comment>
<keyword id="KW-0067">ATP-binding</keyword>
<keyword id="KW-0436">Ligase</keyword>
<keyword id="KW-0547">Nucleotide-binding</keyword>
<keyword id="KW-0658">Purine biosynthesis</keyword>
<name>PUR7_PROMP</name>
<organism>
    <name type="scientific">Prochlorococcus marinus subsp. pastoris (strain CCMP1986 / NIES-2087 / MED4)</name>
    <dbReference type="NCBI Taxonomy" id="59919"/>
    <lineage>
        <taxon>Bacteria</taxon>
        <taxon>Bacillati</taxon>
        <taxon>Cyanobacteriota</taxon>
        <taxon>Cyanophyceae</taxon>
        <taxon>Synechococcales</taxon>
        <taxon>Prochlorococcaceae</taxon>
        <taxon>Prochlorococcus</taxon>
    </lineage>
</organism>